<organism>
    <name type="scientific">Pseudomonas putida (strain ATCC 47054 / DSM 6125 / CFBP 8728 / NCIMB 11950 / KT2440)</name>
    <dbReference type="NCBI Taxonomy" id="160488"/>
    <lineage>
        <taxon>Bacteria</taxon>
        <taxon>Pseudomonadati</taxon>
        <taxon>Pseudomonadota</taxon>
        <taxon>Gammaproteobacteria</taxon>
        <taxon>Pseudomonadales</taxon>
        <taxon>Pseudomonadaceae</taxon>
        <taxon>Pseudomonas</taxon>
    </lineage>
</organism>
<accession>Q88RL1</accession>
<comment type="function">
    <text evidence="1">Part of the ABC transporter complex ZnuABC involved in zinc import. Responsible for energy coupling to the transport system.</text>
</comment>
<comment type="catalytic activity">
    <reaction evidence="1">
        <text>Zn(2+)(out) + ATP(in) + H2O(in) = Zn(2+)(in) + ADP(in) + phosphate(in) + H(+)(in)</text>
        <dbReference type="Rhea" id="RHEA:29795"/>
        <dbReference type="ChEBI" id="CHEBI:15377"/>
        <dbReference type="ChEBI" id="CHEBI:15378"/>
        <dbReference type="ChEBI" id="CHEBI:29105"/>
        <dbReference type="ChEBI" id="CHEBI:30616"/>
        <dbReference type="ChEBI" id="CHEBI:43474"/>
        <dbReference type="ChEBI" id="CHEBI:456216"/>
        <dbReference type="EC" id="7.2.2.20"/>
    </reaction>
</comment>
<comment type="subunit">
    <text evidence="1">The complex is composed of two ATP-binding proteins (ZnuC), two transmembrane proteins (ZnuB) and a solute-binding protein (ZnuA).</text>
</comment>
<comment type="subcellular location">
    <subcellularLocation>
        <location evidence="1">Cell inner membrane</location>
        <topology evidence="1">Peripheral membrane protein</topology>
    </subcellularLocation>
</comment>
<comment type="similarity">
    <text evidence="1">Belongs to the ABC transporter superfamily. Zinc importer (TC 3.A.1.15.5) family.</text>
</comment>
<gene>
    <name evidence="1" type="primary">znuC</name>
    <name type="ordered locus">PP_0118</name>
</gene>
<feature type="chain" id="PRO_0000281529" description="Zinc import ATP-binding protein ZnuC">
    <location>
        <begin position="1"/>
        <end position="257"/>
    </location>
</feature>
<feature type="domain" description="ABC transporter" evidence="1">
    <location>
        <begin position="6"/>
        <end position="221"/>
    </location>
</feature>
<feature type="binding site" evidence="1">
    <location>
        <begin position="38"/>
        <end position="45"/>
    </location>
    <ligand>
        <name>ATP</name>
        <dbReference type="ChEBI" id="CHEBI:30616"/>
    </ligand>
</feature>
<evidence type="ECO:0000255" key="1">
    <source>
        <dbReference type="HAMAP-Rule" id="MF_01725"/>
    </source>
</evidence>
<dbReference type="EC" id="7.2.2.20" evidence="1"/>
<dbReference type="EMBL" id="AE015451">
    <property type="protein sequence ID" value="AAN65752.1"/>
    <property type="molecule type" value="Genomic_DNA"/>
</dbReference>
<dbReference type="RefSeq" id="NP_742288.1">
    <property type="nucleotide sequence ID" value="NC_002947.4"/>
</dbReference>
<dbReference type="RefSeq" id="WP_010951517.1">
    <property type="nucleotide sequence ID" value="NZ_CP169744.1"/>
</dbReference>
<dbReference type="SMR" id="Q88RL1"/>
<dbReference type="STRING" id="160488.PP_0118"/>
<dbReference type="PaxDb" id="160488-PP_0118"/>
<dbReference type="GeneID" id="83677364"/>
<dbReference type="KEGG" id="ppu:PP_0118"/>
<dbReference type="PATRIC" id="fig|160488.4.peg.120"/>
<dbReference type="eggNOG" id="COG1121">
    <property type="taxonomic scope" value="Bacteria"/>
</dbReference>
<dbReference type="HOGENOM" id="CLU_000604_1_11_6"/>
<dbReference type="OrthoDB" id="9780942at2"/>
<dbReference type="PhylomeDB" id="Q88RL1"/>
<dbReference type="BioCyc" id="PPUT160488:G1G01-123-MONOMER"/>
<dbReference type="Proteomes" id="UP000000556">
    <property type="component" value="Chromosome"/>
</dbReference>
<dbReference type="GO" id="GO:0005886">
    <property type="term" value="C:plasma membrane"/>
    <property type="evidence" value="ECO:0007669"/>
    <property type="project" value="UniProtKB-SubCell"/>
</dbReference>
<dbReference type="GO" id="GO:0015633">
    <property type="term" value="F:ABC-type zinc transporter activity"/>
    <property type="evidence" value="ECO:0007669"/>
    <property type="project" value="UniProtKB-EC"/>
</dbReference>
<dbReference type="GO" id="GO:0005524">
    <property type="term" value="F:ATP binding"/>
    <property type="evidence" value="ECO:0007669"/>
    <property type="project" value="UniProtKB-KW"/>
</dbReference>
<dbReference type="GO" id="GO:0016887">
    <property type="term" value="F:ATP hydrolysis activity"/>
    <property type="evidence" value="ECO:0007669"/>
    <property type="project" value="InterPro"/>
</dbReference>
<dbReference type="GO" id="GO:0010043">
    <property type="term" value="P:response to zinc ion"/>
    <property type="evidence" value="ECO:0007669"/>
    <property type="project" value="TreeGrafter"/>
</dbReference>
<dbReference type="CDD" id="cd03235">
    <property type="entry name" value="ABC_Metallic_Cations"/>
    <property type="match status" value="1"/>
</dbReference>
<dbReference type="FunFam" id="3.40.50.300:FF:000392">
    <property type="entry name" value="Zinc import ATP-binding protein ZnuC"/>
    <property type="match status" value="1"/>
</dbReference>
<dbReference type="Gene3D" id="3.40.50.300">
    <property type="entry name" value="P-loop containing nucleotide triphosphate hydrolases"/>
    <property type="match status" value="1"/>
</dbReference>
<dbReference type="InterPro" id="IPR003593">
    <property type="entry name" value="AAA+_ATPase"/>
</dbReference>
<dbReference type="InterPro" id="IPR003439">
    <property type="entry name" value="ABC_transporter-like_ATP-bd"/>
</dbReference>
<dbReference type="InterPro" id="IPR017871">
    <property type="entry name" value="ABC_transporter-like_CS"/>
</dbReference>
<dbReference type="InterPro" id="IPR050153">
    <property type="entry name" value="Metal_Ion_Import_ABC"/>
</dbReference>
<dbReference type="InterPro" id="IPR027417">
    <property type="entry name" value="P-loop_NTPase"/>
</dbReference>
<dbReference type="NCBIfam" id="NF007090">
    <property type="entry name" value="PRK09544.1"/>
    <property type="match status" value="1"/>
</dbReference>
<dbReference type="PANTHER" id="PTHR42734">
    <property type="entry name" value="METAL TRANSPORT SYSTEM ATP-BINDING PROTEIN TM_0124-RELATED"/>
    <property type="match status" value="1"/>
</dbReference>
<dbReference type="PANTHER" id="PTHR42734:SF9">
    <property type="entry name" value="ZINC IMPORT ATP-BINDING PROTEIN ZNUC"/>
    <property type="match status" value="1"/>
</dbReference>
<dbReference type="Pfam" id="PF00005">
    <property type="entry name" value="ABC_tran"/>
    <property type="match status" value="1"/>
</dbReference>
<dbReference type="SMART" id="SM00382">
    <property type="entry name" value="AAA"/>
    <property type="match status" value="1"/>
</dbReference>
<dbReference type="SUPFAM" id="SSF52540">
    <property type="entry name" value="P-loop containing nucleoside triphosphate hydrolases"/>
    <property type="match status" value="1"/>
</dbReference>
<dbReference type="PROSITE" id="PS00211">
    <property type="entry name" value="ABC_TRANSPORTER_1"/>
    <property type="match status" value="1"/>
</dbReference>
<dbReference type="PROSITE" id="PS50893">
    <property type="entry name" value="ABC_TRANSPORTER_2"/>
    <property type="match status" value="1"/>
</dbReference>
<dbReference type="PROSITE" id="PS51298">
    <property type="entry name" value="ZNUC"/>
    <property type="match status" value="1"/>
</dbReference>
<reference key="1">
    <citation type="journal article" date="2002" name="Environ. Microbiol.">
        <title>Complete genome sequence and comparative analysis of the metabolically versatile Pseudomonas putida KT2440.</title>
        <authorList>
            <person name="Nelson K.E."/>
            <person name="Weinel C."/>
            <person name="Paulsen I.T."/>
            <person name="Dodson R.J."/>
            <person name="Hilbert H."/>
            <person name="Martins dos Santos V.A.P."/>
            <person name="Fouts D.E."/>
            <person name="Gill S.R."/>
            <person name="Pop M."/>
            <person name="Holmes M."/>
            <person name="Brinkac L.M."/>
            <person name="Beanan M.J."/>
            <person name="DeBoy R.T."/>
            <person name="Daugherty S.C."/>
            <person name="Kolonay J.F."/>
            <person name="Madupu R."/>
            <person name="Nelson W.C."/>
            <person name="White O."/>
            <person name="Peterson J.D."/>
            <person name="Khouri H.M."/>
            <person name="Hance I."/>
            <person name="Chris Lee P."/>
            <person name="Holtzapple E.K."/>
            <person name="Scanlan D."/>
            <person name="Tran K."/>
            <person name="Moazzez A."/>
            <person name="Utterback T.R."/>
            <person name="Rizzo M."/>
            <person name="Lee K."/>
            <person name="Kosack D."/>
            <person name="Moestl D."/>
            <person name="Wedler H."/>
            <person name="Lauber J."/>
            <person name="Stjepandic D."/>
            <person name="Hoheisel J."/>
            <person name="Straetz M."/>
            <person name="Heim S."/>
            <person name="Kiewitz C."/>
            <person name="Eisen J.A."/>
            <person name="Timmis K.N."/>
            <person name="Duesterhoeft A."/>
            <person name="Tuemmler B."/>
            <person name="Fraser C.M."/>
        </authorList>
    </citation>
    <scope>NUCLEOTIDE SEQUENCE [LARGE SCALE GENOMIC DNA]</scope>
    <source>
        <strain>ATCC 47054 / DSM 6125 / CFBP 8728 / NCIMB 11950 / KT2440</strain>
    </source>
</reference>
<keyword id="KW-0067">ATP-binding</keyword>
<keyword id="KW-0997">Cell inner membrane</keyword>
<keyword id="KW-1003">Cell membrane</keyword>
<keyword id="KW-0406">Ion transport</keyword>
<keyword id="KW-0472">Membrane</keyword>
<keyword id="KW-0547">Nucleotide-binding</keyword>
<keyword id="KW-1185">Reference proteome</keyword>
<keyword id="KW-1278">Translocase</keyword>
<keyword id="KW-0813">Transport</keyword>
<keyword id="KW-0862">Zinc</keyword>
<keyword id="KW-0864">Zinc transport</keyword>
<sequence>MSDALIRLDQVGVTFGGEAVLDSIDLSVAPGQIVTLIGPNGAGKTTLVRAVLGLLKPHRGKVWRKPKLRIGYMPQKIQVDATLPLSVLRFLRLVPGVDRAAALSALQEVGAEQVIDSPIQTISGGEMQRVLLARALLREPQLLVLDEPVQGVDVVGQTELYNLITRLRDRHGCGVLMVSHDLHLVMSATDQVVCLNRHVCCSGHPEQVSGDPAFVELFGKTAPSLAIYHHHHDHSHDLHGSVVAPGTHVHGEHCKHG</sequence>
<name>ZNUC_PSEPK</name>
<protein>
    <recommendedName>
        <fullName evidence="1">Zinc import ATP-binding protein ZnuC</fullName>
        <ecNumber evidence="1">7.2.2.20</ecNumber>
    </recommendedName>
</protein>
<proteinExistence type="inferred from homology"/>